<accession>P22443</accession>
<evidence type="ECO:0000250" key="1"/>
<evidence type="ECO:0000250" key="2">
    <source>
        <dbReference type="UniProtKB" id="P11511"/>
    </source>
</evidence>
<evidence type="ECO:0000305" key="3"/>
<name>CP19A_RAT</name>
<sequence length="508" mass="58412">MFLEMLNPMHYNVTIMVPETVPVSAMPLLLIMGLLLLIRNCESSSSIPGPGYCLGIGPLISHGRFLWMGIGSACNYYNKMYGEFMRVWISGEETLIISKSSSMVHVMKHSNYISRFGSKRGLQCIGMHENGIIFNNNPSLWRTVRPFFMKALTGPGLIRMVEVCVESIKQHLDRLGDVTDNSGYVDVVTLMRHIMLDTSNTLFLGIPLDESSIVKKIQGYFNAWQALLIKPNIFFKISWLYRKYERSVKDLKDEIEILVEKKRQKVSSAEKLEDCMDFATDLIFAERRGDLTKENVNQCILEMLIAAPDTMSVTLYVMLLLIAEYPEVETAILKEIHTVVGDRDIRIGDVQNLKVVENFINESLRYQPVVDLVMRRALEDDVIDGYPVKKGTNIILNIGRMHRLEYFPKPNEFTLENFEKNVPYRYFQPFGFGPRSCAGKYIAMVMMKVVLVTLLKRFHVKTLQKRCIENMPKNNDLSLHLDEDSPIVEIIFRHIFNTPFLQCLYISL</sequence>
<keyword id="KW-0349">Heme</keyword>
<keyword id="KW-0408">Iron</keyword>
<keyword id="KW-0443">Lipid metabolism</keyword>
<keyword id="KW-0472">Membrane</keyword>
<keyword id="KW-0479">Metal-binding</keyword>
<keyword id="KW-0503">Monooxygenase</keyword>
<keyword id="KW-0560">Oxidoreductase</keyword>
<keyword id="KW-1185">Reference proteome</keyword>
<gene>
    <name type="primary">Cyp19a1</name>
    <name type="synonym">Arom</name>
    <name type="synonym">Cyp19</name>
</gene>
<reference key="1">
    <citation type="journal article" date="1990" name="Mol. Endocrinol.">
        <title>Aromatase cytochrome P450 in rat ovarian granulosa cells before and after luteinization: adenosine 3',5'-monophosphate-dependent and independent regulation. Cloning and sequencing of rat aromatase cDNA and 5' genomic DNA.</title>
        <authorList>
            <person name="Hickey G.J."/>
            <person name="Krasnow J.S."/>
            <person name="Beattie W.G."/>
            <person name="Richards J.S."/>
        </authorList>
    </citation>
    <scope>NUCLEOTIDE SEQUENCE [MRNA]</scope>
    <source>
        <tissue>Ovary</tissue>
    </source>
</reference>
<reference key="2">
    <citation type="journal article" date="1990" name="Mol. Cell. Endocrinol.">
        <title>The structure of cDNA clones encoding the aromatase P-450 isolated from a rat Leydig cell tumor line demonstrates differential processing of aromatase mRNA in rat ovary and a neoplastic cell line.</title>
        <authorList>
            <person name="Lephart E.D."/>
            <person name="Peterson K.G."/>
            <person name="Noble J.F."/>
            <person name="George F.W."/>
            <person name="McPhaul M.J."/>
        </authorList>
    </citation>
    <scope>NUCLEOTIDE SEQUENCE [MRNA]</scope>
</reference>
<feature type="chain" id="PRO_0000051962" description="Aromatase">
    <location>
        <begin position="1"/>
        <end position="508"/>
    </location>
</feature>
<feature type="binding site" description="axial binding residue">
    <location>
        <position position="437"/>
    </location>
    <ligand>
        <name>heme</name>
        <dbReference type="ChEBI" id="CHEBI:30413"/>
    </ligand>
    <ligandPart>
        <name>Fe</name>
        <dbReference type="ChEBI" id="CHEBI:18248"/>
    </ligandPart>
</feature>
<feature type="sequence conflict" description="In Ref. 2; no nucleotide entry." evidence="3" ref="2">
    <original>LE</original>
    <variation>FQ</variation>
    <location>
        <begin position="3"/>
        <end position="4"/>
    </location>
</feature>
<feature type="sequence conflict" description="In Ref. 2; no nucleotide entry." evidence="3" ref="2">
    <original>H</original>
    <variation>Q</variation>
    <location>
        <position position="10"/>
    </location>
</feature>
<feature type="sequence conflict" description="In Ref. 2; no nucleotide entry." evidence="3" ref="2">
    <original>W</original>
    <variation>C</variation>
    <location>
        <position position="88"/>
    </location>
</feature>
<feature type="sequence conflict" description="In Ref. 2; no nucleotide entry." evidence="3" ref="2">
    <original>S</original>
    <variation>L</variation>
    <location>
        <position position="101"/>
    </location>
</feature>
<feature type="sequence conflict" description="In Ref. 2; no nucleotide entry." evidence="3" ref="2">
    <original>QCIGMHE</original>
    <variation>VVHGHAR</variation>
    <location>
        <begin position="123"/>
        <end position="129"/>
    </location>
</feature>
<feature type="sequence conflict" description="In Ref. 2; no nucleotide entry." evidence="3" ref="2">
    <original>V</original>
    <variation>L</variation>
    <location>
        <position position="188"/>
    </location>
</feature>
<feature type="sequence conflict" description="In Ref. 2; no nucleotide entry." evidence="3" ref="2">
    <original>E</original>
    <variation>G</variation>
    <location>
        <position position="210"/>
    </location>
</feature>
<feature type="sequence conflict" description="In Ref. 2; no nucleotide entry." evidence="3" ref="2">
    <original>VETA</original>
    <variation>WKQ</variation>
    <location>
        <begin position="328"/>
        <end position="331"/>
    </location>
</feature>
<feature type="sequence conflict" description="In Ref. 2; no nucleotide entry." evidence="3" ref="2">
    <original>D</original>
    <variation>A</variation>
    <location>
        <position position="342"/>
    </location>
</feature>
<feature type="sequence conflict" description="In Ref. 2; no nucleotide entry." evidence="3" ref="2">
    <original>LRYQPV</original>
    <variation>CGISPF</variation>
    <location>
        <begin position="364"/>
        <end position="369"/>
    </location>
</feature>
<feature type="sequence conflict" description="In Ref. 2; no nucleotide entry." evidence="3" ref="2">
    <original>V</original>
    <variation>L</variation>
    <location>
        <position position="422"/>
    </location>
</feature>
<feature type="sequence conflict" description="In Ref. 2; no nucleotide entry." evidence="3" ref="2">
    <original>R</original>
    <variation>T</variation>
    <location>
        <position position="425"/>
    </location>
</feature>
<feature type="sequence conflict" description="In Ref. 2; no nucleotide entry." evidence="3" ref="2">
    <original>V</original>
    <variation>I</variation>
    <location>
        <position position="449"/>
    </location>
</feature>
<feature type="sequence conflict" description="In Ref. 2; no nucleotide entry." evidence="3" ref="2">
    <original>R</original>
    <variation>K</variation>
    <location>
        <position position="466"/>
    </location>
</feature>
<feature type="sequence conflict" description="In Ref. 2; no nucleotide entry." evidence="3" ref="2">
    <original>RHIFN</original>
    <variation>SPRNS</variation>
    <location>
        <begin position="493"/>
        <end position="497"/>
    </location>
</feature>
<dbReference type="EC" id="1.14.14.14" evidence="2"/>
<dbReference type="EMBL" id="M33986">
    <property type="protein sequence ID" value="AAA41044.1"/>
    <property type="molecule type" value="mRNA"/>
</dbReference>
<dbReference type="PIR" id="A36121">
    <property type="entry name" value="A36121"/>
</dbReference>
<dbReference type="SMR" id="P22443"/>
<dbReference type="FunCoup" id="P22443">
    <property type="interactions" value="15"/>
</dbReference>
<dbReference type="STRING" id="10116.ENSRNOP00000000212"/>
<dbReference type="BindingDB" id="P22443"/>
<dbReference type="ChEMBL" id="CHEMBL3859"/>
<dbReference type="DrugCentral" id="P22443"/>
<dbReference type="PhosphoSitePlus" id="P22443"/>
<dbReference type="PaxDb" id="10116-ENSRNOP00000000212"/>
<dbReference type="AGR" id="RGD:2457"/>
<dbReference type="RGD" id="2457">
    <property type="gene designation" value="Cyp19a1"/>
</dbReference>
<dbReference type="eggNOG" id="KOG0157">
    <property type="taxonomic scope" value="Eukaryota"/>
</dbReference>
<dbReference type="InParanoid" id="P22443"/>
<dbReference type="PhylomeDB" id="P22443"/>
<dbReference type="Reactome" id="R-RNO-193144">
    <property type="pathway name" value="Estrogen biosynthesis"/>
</dbReference>
<dbReference type="Reactome" id="R-RNO-211976">
    <property type="pathway name" value="Endogenous sterols"/>
</dbReference>
<dbReference type="PRO" id="PR:P22443"/>
<dbReference type="Proteomes" id="UP000002494">
    <property type="component" value="Unplaced"/>
</dbReference>
<dbReference type="GO" id="GO:0043679">
    <property type="term" value="C:axon terminus"/>
    <property type="evidence" value="ECO:0000314"/>
    <property type="project" value="RGD"/>
</dbReference>
<dbReference type="GO" id="GO:0043197">
    <property type="term" value="C:dendritic spine"/>
    <property type="evidence" value="ECO:0000314"/>
    <property type="project" value="RGD"/>
</dbReference>
<dbReference type="GO" id="GO:0005783">
    <property type="term" value="C:endoplasmic reticulum"/>
    <property type="evidence" value="ECO:0000318"/>
    <property type="project" value="GO_Central"/>
</dbReference>
<dbReference type="GO" id="GO:0016020">
    <property type="term" value="C:membrane"/>
    <property type="evidence" value="ECO:0007669"/>
    <property type="project" value="UniProtKB-SubCell"/>
</dbReference>
<dbReference type="GO" id="GO:0043025">
    <property type="term" value="C:neuronal cell body"/>
    <property type="evidence" value="ECO:0000314"/>
    <property type="project" value="RGD"/>
</dbReference>
<dbReference type="GO" id="GO:0008021">
    <property type="term" value="C:synaptic vesicle"/>
    <property type="evidence" value="ECO:0000314"/>
    <property type="project" value="RGD"/>
</dbReference>
<dbReference type="GO" id="GO:0043195">
    <property type="term" value="C:terminal bouton"/>
    <property type="evidence" value="ECO:0000314"/>
    <property type="project" value="RGD"/>
</dbReference>
<dbReference type="GO" id="GO:0070330">
    <property type="term" value="F:aromatase activity"/>
    <property type="evidence" value="ECO:0000314"/>
    <property type="project" value="RGD"/>
</dbReference>
<dbReference type="GO" id="GO:0020037">
    <property type="term" value="F:heme binding"/>
    <property type="evidence" value="ECO:0000266"/>
    <property type="project" value="RGD"/>
</dbReference>
<dbReference type="GO" id="GO:0005506">
    <property type="term" value="F:iron ion binding"/>
    <property type="evidence" value="ECO:0007669"/>
    <property type="project" value="InterPro"/>
</dbReference>
<dbReference type="GO" id="GO:0016712">
    <property type="term" value="F:oxidoreductase activity, acting on paired donors, with incorporation or reduction of molecular oxygen, reduced flavin or flavoprotein as one donor, and incorporation of one atom of oxygen"/>
    <property type="evidence" value="ECO:0000314"/>
    <property type="project" value="RGD"/>
</dbReference>
<dbReference type="GO" id="GO:0030325">
    <property type="term" value="P:adrenal gland development"/>
    <property type="evidence" value="ECO:0000270"/>
    <property type="project" value="RGD"/>
</dbReference>
<dbReference type="GO" id="GO:0006710">
    <property type="term" value="P:androgen catabolic process"/>
    <property type="evidence" value="ECO:0000266"/>
    <property type="project" value="RGD"/>
</dbReference>
<dbReference type="GO" id="GO:0008209">
    <property type="term" value="P:androgen metabolic process"/>
    <property type="evidence" value="ECO:0000315"/>
    <property type="project" value="RGD"/>
</dbReference>
<dbReference type="GO" id="GO:0008206">
    <property type="term" value="P:bile acid metabolic process"/>
    <property type="evidence" value="ECO:0000270"/>
    <property type="project" value="RGD"/>
</dbReference>
<dbReference type="GO" id="GO:0018879">
    <property type="term" value="P:biphenyl metabolic process"/>
    <property type="evidence" value="ECO:0000270"/>
    <property type="project" value="RGD"/>
</dbReference>
<dbReference type="GO" id="GO:0060348">
    <property type="term" value="P:bone development"/>
    <property type="evidence" value="ECO:0000270"/>
    <property type="project" value="RGD"/>
</dbReference>
<dbReference type="GO" id="GO:0008207">
    <property type="term" value="P:C21-steroid hormone metabolic process"/>
    <property type="evidence" value="ECO:0000314"/>
    <property type="project" value="RGD"/>
</dbReference>
<dbReference type="GO" id="GO:0097720">
    <property type="term" value="P:calcineurin-mediated signaling"/>
    <property type="evidence" value="ECO:0000315"/>
    <property type="project" value="RGD"/>
</dbReference>
<dbReference type="GO" id="GO:0044344">
    <property type="term" value="P:cellular response to fibroblast growth factor stimulus"/>
    <property type="evidence" value="ECO:0000270"/>
    <property type="project" value="RGD"/>
</dbReference>
<dbReference type="GO" id="GO:0071372">
    <property type="term" value="P:cellular response to follicle-stimulating hormone stimulus"/>
    <property type="evidence" value="ECO:0000270"/>
    <property type="project" value="RGD"/>
</dbReference>
<dbReference type="GO" id="GO:0071333">
    <property type="term" value="P:cellular response to glucose stimulus"/>
    <property type="evidence" value="ECO:0000270"/>
    <property type="project" value="RGD"/>
</dbReference>
<dbReference type="GO" id="GO:0071371">
    <property type="term" value="P:cellular response to gonadotropin stimulus"/>
    <property type="evidence" value="ECO:0000270"/>
    <property type="project" value="RGD"/>
</dbReference>
<dbReference type="GO" id="GO:0071464">
    <property type="term" value="P:cellular response to hydrostatic pressure"/>
    <property type="evidence" value="ECO:0000270"/>
    <property type="project" value="RGD"/>
</dbReference>
<dbReference type="GO" id="GO:0006703">
    <property type="term" value="P:estrogen biosynthetic process"/>
    <property type="evidence" value="ECO:0000314"/>
    <property type="project" value="RGD"/>
</dbReference>
<dbReference type="GO" id="GO:0030540">
    <property type="term" value="P:female genitalia development"/>
    <property type="evidence" value="ECO:0000266"/>
    <property type="project" value="RGD"/>
</dbReference>
<dbReference type="GO" id="GO:0008585">
    <property type="term" value="P:female gonad development"/>
    <property type="evidence" value="ECO:0000266"/>
    <property type="project" value="RGD"/>
</dbReference>
<dbReference type="GO" id="GO:0030851">
    <property type="term" value="P:granulocyte differentiation"/>
    <property type="evidence" value="ECO:0000270"/>
    <property type="project" value="RGD"/>
</dbReference>
<dbReference type="GO" id="GO:0021766">
    <property type="term" value="P:hippocampus development"/>
    <property type="evidence" value="ECO:0000270"/>
    <property type="project" value="RGD"/>
</dbReference>
<dbReference type="GO" id="GO:0021854">
    <property type="term" value="P:hypothalamus development"/>
    <property type="evidence" value="ECO:0000270"/>
    <property type="project" value="RGD"/>
</dbReference>
<dbReference type="GO" id="GO:0001553">
    <property type="term" value="P:luteinization"/>
    <property type="evidence" value="ECO:0000270"/>
    <property type="project" value="RGD"/>
</dbReference>
<dbReference type="GO" id="GO:0008584">
    <property type="term" value="P:male gonad development"/>
    <property type="evidence" value="ECO:0000270"/>
    <property type="project" value="RGD"/>
</dbReference>
<dbReference type="GO" id="GO:0030879">
    <property type="term" value="P:mammary gland development"/>
    <property type="evidence" value="ECO:0000266"/>
    <property type="project" value="RGD"/>
</dbReference>
<dbReference type="GO" id="GO:0030186">
    <property type="term" value="P:melatonin metabolic process"/>
    <property type="evidence" value="ECO:0000270"/>
    <property type="project" value="RGD"/>
</dbReference>
<dbReference type="GO" id="GO:0045779">
    <property type="term" value="P:negative regulation of bone resorption"/>
    <property type="evidence" value="ECO:0000315"/>
    <property type="project" value="RGD"/>
</dbReference>
<dbReference type="GO" id="GO:0002677">
    <property type="term" value="P:negative regulation of chronic inflammatory response"/>
    <property type="evidence" value="ECO:0000266"/>
    <property type="project" value="RGD"/>
</dbReference>
<dbReference type="GO" id="GO:0010760">
    <property type="term" value="P:negative regulation of macrophage chemotaxis"/>
    <property type="evidence" value="ECO:0000266"/>
    <property type="project" value="RGD"/>
</dbReference>
<dbReference type="GO" id="GO:0018963">
    <property type="term" value="P:phthalate metabolic process"/>
    <property type="evidence" value="ECO:0000270"/>
    <property type="project" value="RGD"/>
</dbReference>
<dbReference type="GO" id="GO:2000866">
    <property type="term" value="P:positive regulation of estradiol secretion"/>
    <property type="evidence" value="ECO:0000266"/>
    <property type="project" value="RGD"/>
</dbReference>
<dbReference type="GO" id="GO:0060736">
    <property type="term" value="P:prostate gland growth"/>
    <property type="evidence" value="ECO:0000266"/>
    <property type="project" value="RGD"/>
</dbReference>
<dbReference type="GO" id="GO:0050803">
    <property type="term" value="P:regulation of synapse structure or activity"/>
    <property type="evidence" value="ECO:0000315"/>
    <property type="project" value="RGD"/>
</dbReference>
<dbReference type="GO" id="GO:1904612">
    <property type="term" value="P:response to 2,3,7,8-tetrachlorodibenzodioxine"/>
    <property type="evidence" value="ECO:0000270"/>
    <property type="project" value="RGD"/>
</dbReference>
<dbReference type="GO" id="GO:0010164">
    <property type="term" value="P:response to cesium ion"/>
    <property type="evidence" value="ECO:0000270"/>
    <property type="project" value="RGD"/>
</dbReference>
<dbReference type="GO" id="GO:0032355">
    <property type="term" value="P:response to estradiol"/>
    <property type="evidence" value="ECO:0000270"/>
    <property type="project" value="RGD"/>
</dbReference>
<dbReference type="GO" id="GO:0043627">
    <property type="term" value="P:response to estrogen"/>
    <property type="evidence" value="ECO:0000270"/>
    <property type="project" value="RGD"/>
</dbReference>
<dbReference type="GO" id="GO:0009635">
    <property type="term" value="P:response to herbicide"/>
    <property type="evidence" value="ECO:0000270"/>
    <property type="project" value="RGD"/>
</dbReference>
<dbReference type="GO" id="GO:0010212">
    <property type="term" value="P:response to ionizing radiation"/>
    <property type="evidence" value="ECO:0000270"/>
    <property type="project" value="RGD"/>
</dbReference>
<dbReference type="GO" id="GO:0010038">
    <property type="term" value="P:response to metal ion"/>
    <property type="evidence" value="ECO:0000270"/>
    <property type="project" value="RGD"/>
</dbReference>
<dbReference type="GO" id="GO:0033574">
    <property type="term" value="P:response to testosterone"/>
    <property type="evidence" value="ECO:0000270"/>
    <property type="project" value="RGD"/>
</dbReference>
<dbReference type="GO" id="GO:0009410">
    <property type="term" value="P:response to xenobiotic stimulus"/>
    <property type="evidence" value="ECO:0000270"/>
    <property type="project" value="RGD"/>
</dbReference>
<dbReference type="GO" id="GO:0061370">
    <property type="term" value="P:testosterone biosynthetic process"/>
    <property type="evidence" value="ECO:0000266"/>
    <property type="project" value="RGD"/>
</dbReference>
<dbReference type="GO" id="GO:0060065">
    <property type="term" value="P:uterus development"/>
    <property type="evidence" value="ECO:0000266"/>
    <property type="project" value="RGD"/>
</dbReference>
<dbReference type="CDD" id="cd20616">
    <property type="entry name" value="CYP19A1"/>
    <property type="match status" value="1"/>
</dbReference>
<dbReference type="FunFam" id="1.10.630.10:FF:000032">
    <property type="entry name" value="Cytochrome P450 aromatase"/>
    <property type="match status" value="1"/>
</dbReference>
<dbReference type="Gene3D" id="1.10.630.10">
    <property type="entry name" value="Cytochrome P450"/>
    <property type="match status" value="1"/>
</dbReference>
<dbReference type="InterPro" id="IPR001128">
    <property type="entry name" value="Cyt_P450"/>
</dbReference>
<dbReference type="InterPro" id="IPR017972">
    <property type="entry name" value="Cyt_P450_CS"/>
</dbReference>
<dbReference type="InterPro" id="IPR002401">
    <property type="entry name" value="Cyt_P450_E_grp-I"/>
</dbReference>
<dbReference type="InterPro" id="IPR036396">
    <property type="entry name" value="Cyt_P450_sf"/>
</dbReference>
<dbReference type="InterPro" id="IPR050196">
    <property type="entry name" value="Cytochrome_P450_Monoox"/>
</dbReference>
<dbReference type="PANTHER" id="PTHR24291:SF43">
    <property type="entry name" value="AROMATASE"/>
    <property type="match status" value="1"/>
</dbReference>
<dbReference type="PANTHER" id="PTHR24291">
    <property type="entry name" value="CYTOCHROME P450 FAMILY 4"/>
    <property type="match status" value="1"/>
</dbReference>
<dbReference type="Pfam" id="PF00067">
    <property type="entry name" value="p450"/>
    <property type="match status" value="1"/>
</dbReference>
<dbReference type="PRINTS" id="PR00463">
    <property type="entry name" value="EP450I"/>
</dbReference>
<dbReference type="PRINTS" id="PR00385">
    <property type="entry name" value="P450"/>
</dbReference>
<dbReference type="SUPFAM" id="SSF48264">
    <property type="entry name" value="Cytochrome P450"/>
    <property type="match status" value="1"/>
</dbReference>
<dbReference type="PROSITE" id="PS00086">
    <property type="entry name" value="CYTOCHROME_P450"/>
    <property type="match status" value="1"/>
</dbReference>
<organism>
    <name type="scientific">Rattus norvegicus</name>
    <name type="common">Rat</name>
    <dbReference type="NCBI Taxonomy" id="10116"/>
    <lineage>
        <taxon>Eukaryota</taxon>
        <taxon>Metazoa</taxon>
        <taxon>Chordata</taxon>
        <taxon>Craniata</taxon>
        <taxon>Vertebrata</taxon>
        <taxon>Euteleostomi</taxon>
        <taxon>Mammalia</taxon>
        <taxon>Eutheria</taxon>
        <taxon>Euarchontoglires</taxon>
        <taxon>Glires</taxon>
        <taxon>Rodentia</taxon>
        <taxon>Myomorpha</taxon>
        <taxon>Muroidea</taxon>
        <taxon>Muridae</taxon>
        <taxon>Murinae</taxon>
        <taxon>Rattus</taxon>
    </lineage>
</organism>
<protein>
    <recommendedName>
        <fullName>Aromatase</fullName>
        <ecNumber evidence="2">1.14.14.14</ecNumber>
    </recommendedName>
    <alternativeName>
        <fullName>CYPXIX</fullName>
    </alternativeName>
    <alternativeName>
        <fullName>Cytochrome P-450AROM</fullName>
    </alternativeName>
    <alternativeName>
        <fullName>Cytochrome P450 19A1</fullName>
    </alternativeName>
    <alternativeName>
        <fullName>Estrogen synthase</fullName>
    </alternativeName>
</protein>
<proteinExistence type="evidence at transcript level"/>
<comment type="function">
    <text>Catalyzes the formation of aromatic C18 estrogens from C19 androgens.</text>
</comment>
<comment type="catalytic activity">
    <reaction evidence="2">
        <text>testosterone + 3 reduced [NADPH--hemoprotein reductase] + 3 O2 = 17beta-estradiol + formate + 3 oxidized [NADPH--hemoprotein reductase] + 4 H2O + 4 H(+)</text>
        <dbReference type="Rhea" id="RHEA:38191"/>
        <dbReference type="Rhea" id="RHEA-COMP:11964"/>
        <dbReference type="Rhea" id="RHEA-COMP:11965"/>
        <dbReference type="ChEBI" id="CHEBI:15377"/>
        <dbReference type="ChEBI" id="CHEBI:15378"/>
        <dbReference type="ChEBI" id="CHEBI:15379"/>
        <dbReference type="ChEBI" id="CHEBI:15740"/>
        <dbReference type="ChEBI" id="CHEBI:16469"/>
        <dbReference type="ChEBI" id="CHEBI:17347"/>
        <dbReference type="ChEBI" id="CHEBI:57618"/>
        <dbReference type="ChEBI" id="CHEBI:58210"/>
        <dbReference type="EC" id="1.14.14.14"/>
    </reaction>
</comment>
<comment type="catalytic activity">
    <reaction evidence="2">
        <text>androst-4-ene-3,17-dione + 3 reduced [NADPH--hemoprotein reductase] + 3 O2 = estrone + formate + 3 oxidized [NADPH--hemoprotein reductase] + 4 H2O + 4 H(+)</text>
        <dbReference type="Rhea" id="RHEA:38195"/>
        <dbReference type="Rhea" id="RHEA-COMP:11964"/>
        <dbReference type="Rhea" id="RHEA-COMP:11965"/>
        <dbReference type="ChEBI" id="CHEBI:15377"/>
        <dbReference type="ChEBI" id="CHEBI:15378"/>
        <dbReference type="ChEBI" id="CHEBI:15379"/>
        <dbReference type="ChEBI" id="CHEBI:15740"/>
        <dbReference type="ChEBI" id="CHEBI:16422"/>
        <dbReference type="ChEBI" id="CHEBI:17263"/>
        <dbReference type="ChEBI" id="CHEBI:57618"/>
        <dbReference type="ChEBI" id="CHEBI:58210"/>
        <dbReference type="EC" id="1.14.14.14"/>
    </reaction>
</comment>
<comment type="cofactor">
    <cofactor evidence="1">
        <name>heme</name>
        <dbReference type="ChEBI" id="CHEBI:30413"/>
    </cofactor>
</comment>
<comment type="subcellular location">
    <subcellularLocation>
        <location>Membrane</location>
        <topology>Peripheral membrane protein</topology>
    </subcellularLocation>
</comment>
<comment type="similarity">
    <text evidence="3">Belongs to the cytochrome P450 family.</text>
</comment>